<gene>
    <name evidence="1" type="primary">hutI</name>
    <name type="ordered locus">SO_0095</name>
</gene>
<reference key="1">
    <citation type="journal article" date="2002" name="Nat. Biotechnol.">
        <title>Genome sequence of the dissimilatory metal ion-reducing bacterium Shewanella oneidensis.</title>
        <authorList>
            <person name="Heidelberg J.F."/>
            <person name="Paulsen I.T."/>
            <person name="Nelson K.E."/>
            <person name="Gaidos E.J."/>
            <person name="Nelson W.C."/>
            <person name="Read T.D."/>
            <person name="Eisen J.A."/>
            <person name="Seshadri R."/>
            <person name="Ward N.L."/>
            <person name="Methe B.A."/>
            <person name="Clayton R.A."/>
            <person name="Meyer T."/>
            <person name="Tsapin A."/>
            <person name="Scott J."/>
            <person name="Beanan M.J."/>
            <person name="Brinkac L.M."/>
            <person name="Daugherty S.C."/>
            <person name="DeBoy R.T."/>
            <person name="Dodson R.J."/>
            <person name="Durkin A.S."/>
            <person name="Haft D.H."/>
            <person name="Kolonay J.F."/>
            <person name="Madupu R."/>
            <person name="Peterson J.D."/>
            <person name="Umayam L.A."/>
            <person name="White O."/>
            <person name="Wolf A.M."/>
            <person name="Vamathevan J.J."/>
            <person name="Weidman J.F."/>
            <person name="Impraim M."/>
            <person name="Lee K."/>
            <person name="Berry K.J."/>
            <person name="Lee C."/>
            <person name="Mueller J."/>
            <person name="Khouri H.M."/>
            <person name="Gill J."/>
            <person name="Utterback T.R."/>
            <person name="McDonald L.A."/>
            <person name="Feldblyum T.V."/>
            <person name="Smith H.O."/>
            <person name="Venter J.C."/>
            <person name="Nealson K.H."/>
            <person name="Fraser C.M."/>
        </authorList>
    </citation>
    <scope>NUCLEOTIDE SEQUENCE [LARGE SCALE GENOMIC DNA]</scope>
    <source>
        <strain>ATCC 700550 / JCM 31522 / CIP 106686 / LMG 19005 / NCIMB 14063 / MR-1</strain>
    </source>
</reference>
<evidence type="ECO:0000255" key="1">
    <source>
        <dbReference type="HAMAP-Rule" id="MF_00372"/>
    </source>
</evidence>
<protein>
    <recommendedName>
        <fullName evidence="1">Imidazolonepropionase</fullName>
        <ecNumber evidence="1">3.5.2.7</ecNumber>
    </recommendedName>
    <alternativeName>
        <fullName evidence="1">Imidazolone-5-propionate hydrolase</fullName>
    </alternativeName>
</protein>
<feature type="chain" id="PRO_0000306510" description="Imidazolonepropionase">
    <location>
        <begin position="1"/>
        <end position="408"/>
    </location>
</feature>
<feature type="binding site" evidence="1">
    <location>
        <position position="73"/>
    </location>
    <ligand>
        <name>Fe(3+)</name>
        <dbReference type="ChEBI" id="CHEBI:29034"/>
    </ligand>
</feature>
<feature type="binding site" evidence="1">
    <location>
        <position position="73"/>
    </location>
    <ligand>
        <name>Zn(2+)</name>
        <dbReference type="ChEBI" id="CHEBI:29105"/>
    </ligand>
</feature>
<feature type="binding site" evidence="1">
    <location>
        <position position="75"/>
    </location>
    <ligand>
        <name>Fe(3+)</name>
        <dbReference type="ChEBI" id="CHEBI:29034"/>
    </ligand>
</feature>
<feature type="binding site" evidence="1">
    <location>
        <position position="75"/>
    </location>
    <ligand>
        <name>Zn(2+)</name>
        <dbReference type="ChEBI" id="CHEBI:29105"/>
    </ligand>
</feature>
<feature type="binding site" evidence="1">
    <location>
        <position position="82"/>
    </location>
    <ligand>
        <name>4-imidazolone-5-propanoate</name>
        <dbReference type="ChEBI" id="CHEBI:77893"/>
    </ligand>
</feature>
<feature type="binding site" evidence="1">
    <location>
        <position position="145"/>
    </location>
    <ligand>
        <name>4-imidazolone-5-propanoate</name>
        <dbReference type="ChEBI" id="CHEBI:77893"/>
    </ligand>
</feature>
<feature type="binding site" evidence="1">
    <location>
        <position position="145"/>
    </location>
    <ligand>
        <name>N-formimidoyl-L-glutamate</name>
        <dbReference type="ChEBI" id="CHEBI:58928"/>
    </ligand>
</feature>
<feature type="binding site" evidence="1">
    <location>
        <position position="178"/>
    </location>
    <ligand>
        <name>4-imidazolone-5-propanoate</name>
        <dbReference type="ChEBI" id="CHEBI:77893"/>
    </ligand>
</feature>
<feature type="binding site" evidence="1">
    <location>
        <position position="243"/>
    </location>
    <ligand>
        <name>Fe(3+)</name>
        <dbReference type="ChEBI" id="CHEBI:29034"/>
    </ligand>
</feature>
<feature type="binding site" evidence="1">
    <location>
        <position position="243"/>
    </location>
    <ligand>
        <name>Zn(2+)</name>
        <dbReference type="ChEBI" id="CHEBI:29105"/>
    </ligand>
</feature>
<feature type="binding site" evidence="1">
    <location>
        <position position="246"/>
    </location>
    <ligand>
        <name>4-imidazolone-5-propanoate</name>
        <dbReference type="ChEBI" id="CHEBI:77893"/>
    </ligand>
</feature>
<feature type="binding site" evidence="1">
    <location>
        <position position="318"/>
    </location>
    <ligand>
        <name>Fe(3+)</name>
        <dbReference type="ChEBI" id="CHEBI:29034"/>
    </ligand>
</feature>
<feature type="binding site" evidence="1">
    <location>
        <position position="318"/>
    </location>
    <ligand>
        <name>Zn(2+)</name>
        <dbReference type="ChEBI" id="CHEBI:29105"/>
    </ligand>
</feature>
<feature type="binding site" evidence="1">
    <location>
        <position position="320"/>
    </location>
    <ligand>
        <name>N-formimidoyl-L-glutamate</name>
        <dbReference type="ChEBI" id="CHEBI:58928"/>
    </ligand>
</feature>
<feature type="binding site" evidence="1">
    <location>
        <position position="322"/>
    </location>
    <ligand>
        <name>N-formimidoyl-L-glutamate</name>
        <dbReference type="ChEBI" id="CHEBI:58928"/>
    </ligand>
</feature>
<feature type="binding site" evidence="1">
    <location>
        <position position="323"/>
    </location>
    <ligand>
        <name>4-imidazolone-5-propanoate</name>
        <dbReference type="ChEBI" id="CHEBI:77893"/>
    </ligand>
</feature>
<proteinExistence type="inferred from homology"/>
<organism>
    <name type="scientific">Shewanella oneidensis (strain ATCC 700550 / JCM 31522 / CIP 106686 / LMG 19005 / NCIMB 14063 / MR-1)</name>
    <dbReference type="NCBI Taxonomy" id="211586"/>
    <lineage>
        <taxon>Bacteria</taxon>
        <taxon>Pseudomonadati</taxon>
        <taxon>Pseudomonadota</taxon>
        <taxon>Gammaproteobacteria</taxon>
        <taxon>Alteromonadales</taxon>
        <taxon>Shewanellaceae</taxon>
        <taxon>Shewanella</taxon>
    </lineage>
</organism>
<dbReference type="EC" id="3.5.2.7" evidence="1"/>
<dbReference type="EMBL" id="AE014299">
    <property type="protein sequence ID" value="AAN53182.1"/>
    <property type="molecule type" value="Genomic_DNA"/>
</dbReference>
<dbReference type="RefSeq" id="NP_715737.1">
    <property type="nucleotide sequence ID" value="NC_004347.2"/>
</dbReference>
<dbReference type="RefSeq" id="WP_011070505.1">
    <property type="nucleotide sequence ID" value="NC_004347.2"/>
</dbReference>
<dbReference type="SMR" id="Q8EKJ7"/>
<dbReference type="STRING" id="211586.SO_0095"/>
<dbReference type="PaxDb" id="211586-SO_0095"/>
<dbReference type="KEGG" id="son:SO_0095"/>
<dbReference type="PATRIC" id="fig|211586.12.peg.95"/>
<dbReference type="eggNOG" id="COG1228">
    <property type="taxonomic scope" value="Bacteria"/>
</dbReference>
<dbReference type="HOGENOM" id="CLU_041647_0_0_6"/>
<dbReference type="OrthoDB" id="9776455at2"/>
<dbReference type="PhylomeDB" id="Q8EKJ7"/>
<dbReference type="BioCyc" id="SONE211586:G1GMP-93-MONOMER"/>
<dbReference type="UniPathway" id="UPA00379">
    <property type="reaction ID" value="UER00551"/>
</dbReference>
<dbReference type="Proteomes" id="UP000008186">
    <property type="component" value="Chromosome"/>
</dbReference>
<dbReference type="GO" id="GO:0005737">
    <property type="term" value="C:cytoplasm"/>
    <property type="evidence" value="ECO:0007669"/>
    <property type="project" value="UniProtKB-SubCell"/>
</dbReference>
<dbReference type="GO" id="GO:0050480">
    <property type="term" value="F:imidazolonepropionase activity"/>
    <property type="evidence" value="ECO:0000318"/>
    <property type="project" value="GO_Central"/>
</dbReference>
<dbReference type="GO" id="GO:0005506">
    <property type="term" value="F:iron ion binding"/>
    <property type="evidence" value="ECO:0007669"/>
    <property type="project" value="UniProtKB-UniRule"/>
</dbReference>
<dbReference type="GO" id="GO:0008270">
    <property type="term" value="F:zinc ion binding"/>
    <property type="evidence" value="ECO:0007669"/>
    <property type="project" value="UniProtKB-UniRule"/>
</dbReference>
<dbReference type="GO" id="GO:0006548">
    <property type="term" value="P:L-histidine catabolic process"/>
    <property type="evidence" value="ECO:0000318"/>
    <property type="project" value="GO_Central"/>
</dbReference>
<dbReference type="GO" id="GO:0019556">
    <property type="term" value="P:L-histidine catabolic process to glutamate and formamide"/>
    <property type="evidence" value="ECO:0007669"/>
    <property type="project" value="UniProtKB-UniPathway"/>
</dbReference>
<dbReference type="GO" id="GO:0019557">
    <property type="term" value="P:L-histidine catabolic process to glutamate and formate"/>
    <property type="evidence" value="ECO:0007669"/>
    <property type="project" value="UniProtKB-UniPathway"/>
</dbReference>
<dbReference type="CDD" id="cd01296">
    <property type="entry name" value="Imidazolone-5PH"/>
    <property type="match status" value="1"/>
</dbReference>
<dbReference type="FunFam" id="3.20.20.140:FF:000007">
    <property type="entry name" value="Imidazolonepropionase"/>
    <property type="match status" value="1"/>
</dbReference>
<dbReference type="Gene3D" id="3.20.20.140">
    <property type="entry name" value="Metal-dependent hydrolases"/>
    <property type="match status" value="1"/>
</dbReference>
<dbReference type="Gene3D" id="2.30.40.10">
    <property type="entry name" value="Urease, subunit C, domain 1"/>
    <property type="match status" value="1"/>
</dbReference>
<dbReference type="HAMAP" id="MF_00372">
    <property type="entry name" value="HutI"/>
    <property type="match status" value="1"/>
</dbReference>
<dbReference type="InterPro" id="IPR006680">
    <property type="entry name" value="Amidohydro-rel"/>
</dbReference>
<dbReference type="InterPro" id="IPR005920">
    <property type="entry name" value="HutI"/>
</dbReference>
<dbReference type="InterPro" id="IPR011059">
    <property type="entry name" value="Metal-dep_hydrolase_composite"/>
</dbReference>
<dbReference type="InterPro" id="IPR032466">
    <property type="entry name" value="Metal_Hydrolase"/>
</dbReference>
<dbReference type="NCBIfam" id="TIGR01224">
    <property type="entry name" value="hutI"/>
    <property type="match status" value="1"/>
</dbReference>
<dbReference type="PANTHER" id="PTHR42752">
    <property type="entry name" value="IMIDAZOLONEPROPIONASE"/>
    <property type="match status" value="1"/>
</dbReference>
<dbReference type="PANTHER" id="PTHR42752:SF1">
    <property type="entry name" value="IMIDAZOLONEPROPIONASE-RELATED"/>
    <property type="match status" value="1"/>
</dbReference>
<dbReference type="Pfam" id="PF01979">
    <property type="entry name" value="Amidohydro_1"/>
    <property type="match status" value="1"/>
</dbReference>
<dbReference type="SUPFAM" id="SSF51338">
    <property type="entry name" value="Composite domain of metallo-dependent hydrolases"/>
    <property type="match status" value="1"/>
</dbReference>
<dbReference type="SUPFAM" id="SSF51556">
    <property type="entry name" value="Metallo-dependent hydrolases"/>
    <property type="match status" value="1"/>
</dbReference>
<comment type="function">
    <text evidence="1">Catalyzes the hydrolytic cleavage of the carbon-nitrogen bond in imidazolone-5-propanoate to yield N-formimidoyl-L-glutamate. It is the third step in the universal histidine degradation pathway.</text>
</comment>
<comment type="catalytic activity">
    <reaction evidence="1">
        <text>4-imidazolone-5-propanoate + H2O = N-formimidoyl-L-glutamate</text>
        <dbReference type="Rhea" id="RHEA:23660"/>
        <dbReference type="ChEBI" id="CHEBI:15377"/>
        <dbReference type="ChEBI" id="CHEBI:58928"/>
        <dbReference type="ChEBI" id="CHEBI:77893"/>
        <dbReference type="EC" id="3.5.2.7"/>
    </reaction>
</comment>
<comment type="cofactor">
    <cofactor evidence="1">
        <name>Zn(2+)</name>
        <dbReference type="ChEBI" id="CHEBI:29105"/>
    </cofactor>
    <cofactor evidence="1">
        <name>Fe(3+)</name>
        <dbReference type="ChEBI" id="CHEBI:29034"/>
    </cofactor>
    <text evidence="1">Binds 1 zinc or iron ion per subunit.</text>
</comment>
<comment type="pathway">
    <text evidence="1">Amino-acid degradation; L-histidine degradation into L-glutamate; N-formimidoyl-L-glutamate from L-histidine: step 3/3.</text>
</comment>
<comment type="subcellular location">
    <subcellularLocation>
        <location evidence="1">Cytoplasm</location>
    </subcellularLocation>
</comment>
<comment type="similarity">
    <text evidence="1">Belongs to the metallo-dependent hydrolases superfamily. HutI family.</text>
</comment>
<keyword id="KW-0963">Cytoplasm</keyword>
<keyword id="KW-0369">Histidine metabolism</keyword>
<keyword id="KW-0378">Hydrolase</keyword>
<keyword id="KW-0408">Iron</keyword>
<keyword id="KW-0479">Metal-binding</keyword>
<keyword id="KW-1185">Reference proteome</keyword>
<keyword id="KW-0862">Zinc</keyword>
<name>HUTI_SHEON</name>
<accession>Q8EKJ7</accession>
<sequence>MSWDQVWIDVNVATMDPSISAPYGAITHAAIAVKDGKIAWLGPRSELPAFDVLSIPVYRGKGGWITPGLIDAHTHLVFAGNRANEFELRLKGATYEEIARAGGGIISTVNACREADEAALFELGRQRLNALAKEGVTTVEIKSGYGLDTETELKILRVARELGKHHHVDVKTTFLGAHAVPPEYKGNSDGYVDLIINKMLPAVIKENLADAVDVFCENIAFNLEQTERVLSAAKAAGLQVKLHAEQLSNMGGSELAARLGAKSVDHIEYLDEAGVKALSESGTCAVLLPGAFYFLRETQKPPIDLLRQYGVPMVLASDFNPGSFPICSTLLMLNMGCTLFRLTPEEALAGLTLNAAKALGIEDKVGSLVVGKQADFCLWNIATPAQLAYSYGVNPCKDVVKNGKLVHQ</sequence>